<evidence type="ECO:0000250" key="1"/>
<evidence type="ECO:0000255" key="2"/>
<evidence type="ECO:0000256" key="3">
    <source>
        <dbReference type="SAM" id="MobiDB-lite"/>
    </source>
</evidence>
<evidence type="ECO:0000305" key="4"/>
<comment type="function">
    <text evidence="1">Probable mitochondrial mRNA stabilization factor.</text>
</comment>
<comment type="subcellular location">
    <subcellularLocation>
        <location evidence="1">Mitochondrion inner membrane</location>
        <topology evidence="1">Peripheral membrane protein</topology>
        <orientation evidence="1">Matrix side</orientation>
    </subcellularLocation>
</comment>
<comment type="similarity">
    <text evidence="4">Belongs to the ATP25 family.</text>
</comment>
<comment type="sequence caution" evidence="4">
    <conflict type="erroneous gene model prediction">
        <sequence resource="EMBL-CDS" id="EAA61357"/>
    </conflict>
    <text>AN7306 was demerged into AN10923 and AN10925.</text>
</comment>
<name>ATP25_EMENI</name>
<gene>
    <name type="primary">atp25</name>
    <name type="ORF">AN10923</name>
</gene>
<dbReference type="EMBL" id="AACD01000127">
    <property type="protein sequence ID" value="EAA61357.1"/>
    <property type="status" value="ALT_SEQ"/>
    <property type="molecule type" value="Genomic_DNA"/>
</dbReference>
<dbReference type="EMBL" id="BN001304">
    <property type="protein sequence ID" value="CBF78654.1"/>
    <property type="molecule type" value="Genomic_DNA"/>
</dbReference>
<dbReference type="SMR" id="C8VCP9"/>
<dbReference type="STRING" id="227321.C8VCP9"/>
<dbReference type="EnsemblFungi" id="CBF78654">
    <property type="protein sequence ID" value="CBF78654"/>
    <property type="gene ID" value="ANIA_10923"/>
</dbReference>
<dbReference type="VEuPathDB" id="FungiDB:AN10923"/>
<dbReference type="eggNOG" id="ENOG502S5IB">
    <property type="taxonomic scope" value="Eukaryota"/>
</dbReference>
<dbReference type="HOGENOM" id="CLU_272850_0_0_1"/>
<dbReference type="InParanoid" id="C8VCP9"/>
<dbReference type="OMA" id="CLSSWVP"/>
<dbReference type="OrthoDB" id="107372at2759"/>
<dbReference type="Proteomes" id="UP000000560">
    <property type="component" value="Chromosome IV"/>
</dbReference>
<dbReference type="GO" id="GO:0005743">
    <property type="term" value="C:mitochondrial inner membrane"/>
    <property type="evidence" value="ECO:0007669"/>
    <property type="project" value="UniProtKB-SubCell"/>
</dbReference>
<dbReference type="GO" id="GO:0005739">
    <property type="term" value="C:mitochondrion"/>
    <property type="evidence" value="ECO:0000318"/>
    <property type="project" value="GO_Central"/>
</dbReference>
<dbReference type="GO" id="GO:0140053">
    <property type="term" value="P:mitochondrial gene expression"/>
    <property type="evidence" value="ECO:0007669"/>
    <property type="project" value="InterPro"/>
</dbReference>
<dbReference type="GO" id="GO:0048255">
    <property type="term" value="P:mRNA stabilization"/>
    <property type="evidence" value="ECO:0000318"/>
    <property type="project" value="GO_Central"/>
</dbReference>
<dbReference type="FunFam" id="3.30.460.10:FF:000044">
    <property type="entry name" value="ATPase synthesis protein 25, mitochondrial"/>
    <property type="match status" value="1"/>
</dbReference>
<dbReference type="Gene3D" id="3.30.460.10">
    <property type="entry name" value="Beta Polymerase, domain 2"/>
    <property type="match status" value="1"/>
</dbReference>
<dbReference type="InterPro" id="IPR040152">
    <property type="entry name" value="Atp25"/>
</dbReference>
<dbReference type="InterPro" id="IPR043519">
    <property type="entry name" value="NT_sf"/>
</dbReference>
<dbReference type="PANTHER" id="PTHR28087">
    <property type="entry name" value="ATPASE SYNTHESIS PROTEIN 25, MITOCHONDRIAL"/>
    <property type="match status" value="1"/>
</dbReference>
<dbReference type="PANTHER" id="PTHR28087:SF1">
    <property type="entry name" value="ATPASE SYNTHESIS PROTEIN 25, MITOCHONDRIAL"/>
    <property type="match status" value="1"/>
</dbReference>
<dbReference type="Pfam" id="PF02410">
    <property type="entry name" value="RsfS"/>
    <property type="match status" value="1"/>
</dbReference>
<dbReference type="SUPFAM" id="SSF81301">
    <property type="entry name" value="Nucleotidyltransferase"/>
    <property type="match status" value="1"/>
</dbReference>
<protein>
    <recommendedName>
        <fullName>ATPase synthesis protein 25, mitochondrial</fullName>
    </recommendedName>
</protein>
<reference key="1">
    <citation type="journal article" date="2005" name="Nature">
        <title>Sequencing of Aspergillus nidulans and comparative analysis with A. fumigatus and A. oryzae.</title>
        <authorList>
            <person name="Galagan J.E."/>
            <person name="Calvo S.E."/>
            <person name="Cuomo C."/>
            <person name="Ma L.-J."/>
            <person name="Wortman J.R."/>
            <person name="Batzoglou S."/>
            <person name="Lee S.-I."/>
            <person name="Bastuerkmen M."/>
            <person name="Spevak C.C."/>
            <person name="Clutterbuck J."/>
            <person name="Kapitonov V."/>
            <person name="Jurka J."/>
            <person name="Scazzocchio C."/>
            <person name="Farman M.L."/>
            <person name="Butler J."/>
            <person name="Purcell S."/>
            <person name="Harris S."/>
            <person name="Braus G.H."/>
            <person name="Draht O."/>
            <person name="Busch S."/>
            <person name="D'Enfert C."/>
            <person name="Bouchier C."/>
            <person name="Goldman G.H."/>
            <person name="Bell-Pedersen D."/>
            <person name="Griffiths-Jones S."/>
            <person name="Doonan J.H."/>
            <person name="Yu J."/>
            <person name="Vienken K."/>
            <person name="Pain A."/>
            <person name="Freitag M."/>
            <person name="Selker E.U."/>
            <person name="Archer D.B."/>
            <person name="Penalva M.A."/>
            <person name="Oakley B.R."/>
            <person name="Momany M."/>
            <person name="Tanaka T."/>
            <person name="Kumagai T."/>
            <person name="Asai K."/>
            <person name="Machida M."/>
            <person name="Nierman W.C."/>
            <person name="Denning D.W."/>
            <person name="Caddick M.X."/>
            <person name="Hynes M."/>
            <person name="Paoletti M."/>
            <person name="Fischer R."/>
            <person name="Miller B.L."/>
            <person name="Dyer P.S."/>
            <person name="Sachs M.S."/>
            <person name="Osmani S.A."/>
            <person name="Birren B.W."/>
        </authorList>
    </citation>
    <scope>NUCLEOTIDE SEQUENCE [LARGE SCALE GENOMIC DNA]</scope>
    <source>
        <strain>FGSC A4 / ATCC 38163 / CBS 112.46 / NRRL 194 / M139</strain>
    </source>
</reference>
<reference key="2">
    <citation type="journal article" date="2009" name="Fungal Genet. Biol.">
        <title>The 2008 update of the Aspergillus nidulans genome annotation: a community effort.</title>
        <authorList>
            <person name="Wortman J.R."/>
            <person name="Gilsenan J.M."/>
            <person name="Joardar V."/>
            <person name="Deegan J."/>
            <person name="Clutterbuck J."/>
            <person name="Andersen M.R."/>
            <person name="Archer D."/>
            <person name="Bencina M."/>
            <person name="Braus G."/>
            <person name="Coutinho P."/>
            <person name="von Dohren H."/>
            <person name="Doonan J."/>
            <person name="Driessen A.J."/>
            <person name="Durek P."/>
            <person name="Espeso E."/>
            <person name="Fekete E."/>
            <person name="Flipphi M."/>
            <person name="Estrada C.G."/>
            <person name="Geysens S."/>
            <person name="Goldman G."/>
            <person name="de Groot P.W."/>
            <person name="Hansen K."/>
            <person name="Harris S.D."/>
            <person name="Heinekamp T."/>
            <person name="Helmstaedt K."/>
            <person name="Henrissat B."/>
            <person name="Hofmann G."/>
            <person name="Homan T."/>
            <person name="Horio T."/>
            <person name="Horiuchi H."/>
            <person name="James S."/>
            <person name="Jones M."/>
            <person name="Karaffa L."/>
            <person name="Karanyi Z."/>
            <person name="Kato M."/>
            <person name="Keller N."/>
            <person name="Kelly D.E."/>
            <person name="Kiel J.A."/>
            <person name="Kim J.M."/>
            <person name="van der Klei I.J."/>
            <person name="Klis F.M."/>
            <person name="Kovalchuk A."/>
            <person name="Krasevec N."/>
            <person name="Kubicek C.P."/>
            <person name="Liu B."/>
            <person name="Maccabe A."/>
            <person name="Meyer V."/>
            <person name="Mirabito P."/>
            <person name="Miskei M."/>
            <person name="Mos M."/>
            <person name="Mullins J."/>
            <person name="Nelson D.R."/>
            <person name="Nielsen J."/>
            <person name="Oakley B.R."/>
            <person name="Osmani S.A."/>
            <person name="Pakula T."/>
            <person name="Paszewski A."/>
            <person name="Paulsen I."/>
            <person name="Pilsyk S."/>
            <person name="Pocsi I."/>
            <person name="Punt P.J."/>
            <person name="Ram A.F."/>
            <person name="Ren Q."/>
            <person name="Robellet X."/>
            <person name="Robson G."/>
            <person name="Seiboth B."/>
            <person name="van Solingen P."/>
            <person name="Specht T."/>
            <person name="Sun J."/>
            <person name="Taheri-Talesh N."/>
            <person name="Takeshita N."/>
            <person name="Ussery D."/>
            <person name="vanKuyk P.A."/>
            <person name="Visser H."/>
            <person name="van de Vondervoort P.J."/>
            <person name="de Vries R.P."/>
            <person name="Walton J."/>
            <person name="Xiang X."/>
            <person name="Xiong Y."/>
            <person name="Zeng A.P."/>
            <person name="Brandt B.W."/>
            <person name="Cornell M.J."/>
            <person name="van den Hondel C.A."/>
            <person name="Visser J."/>
            <person name="Oliver S.G."/>
            <person name="Turner G."/>
        </authorList>
    </citation>
    <scope>GENOME REANNOTATION</scope>
    <source>
        <strain>FGSC A4 / ATCC 38163 / CBS 112.46 / NRRL 194 / M139</strain>
    </source>
</reference>
<feature type="transit peptide" description="Mitochondrion" evidence="2">
    <location>
        <begin position="1"/>
        <end position="45"/>
    </location>
</feature>
<feature type="chain" id="PRO_0000404471" description="ATPase synthesis protein 25, mitochondrial">
    <location>
        <begin position="46"/>
        <end position="681"/>
    </location>
</feature>
<feature type="region of interest" description="Disordered" evidence="3">
    <location>
        <begin position="40"/>
        <end position="74"/>
    </location>
</feature>
<feature type="region of interest" description="Disordered" evidence="3">
    <location>
        <begin position="284"/>
        <end position="320"/>
    </location>
</feature>
<feature type="compositionally biased region" description="Low complexity" evidence="3">
    <location>
        <begin position="40"/>
        <end position="61"/>
    </location>
</feature>
<feature type="compositionally biased region" description="Basic and acidic residues" evidence="3">
    <location>
        <begin position="284"/>
        <end position="301"/>
    </location>
</feature>
<feature type="compositionally biased region" description="Polar residues" evidence="3">
    <location>
        <begin position="304"/>
        <end position="314"/>
    </location>
</feature>
<accession>C8VCP9</accession>
<accession>Q5AWM4</accession>
<sequence length="681" mass="76980">MTLLRAPQRFQYASRVFTSTSLSTPRHAYLTYSRVRSLTSTSHHPTKSHPSLSSSTSNTTSVEENDAPKSQCTPQASQHIPWYLQEESSVPAVSEVTLQEKLPELPENPPKILPELLEYIFKDLGLDELKLIDLRPLETPSALGANVIMIIGTARSVKHLNVSADRLCRWLRSEYKLSPYADGLLGRNELKIKLRRKNRRARIASRTGTMFDDKDDGITTGWICVNAGVVEEHPVEERVEGDFEGFGPLVGGTRVVVQVFTAEKRAEMDLETLWEGRLARAQRERQKHADAAKDDAPEEVRYPNSISPSPSDYKSPNVPRSWISLPHEQRRQFHIRSLRSFARPAHHAVFTPRFMSQNHTPAEHAIVGSELSSPTAMLLQYITTMPDQQLMSALGDRPDDESSTDFLRLFHHSLLGASPNVLALARLELLCLAHSRGHTGISKESVHRAFMGCCFSASHIPDRLIPTVVDILLTPRTGDNPDGEKWFTDADKELALSALDQLVLRGNDFMNLQFFTRLYYLSSLPPGPPGEENDDGLTPAERGAHVVRMIEILDIPFDPIHARTLMVYLFRNGDYDAFMKWWRTLPLKNSPRTREDYEMLFRLHADSGDSRLTRECISTWAPMMSREDPPIWLEGDLVAHLRDCLLLADERTPARAAEGTQSLFAKLWRACERELNKSEVV</sequence>
<proteinExistence type="inferred from homology"/>
<keyword id="KW-0472">Membrane</keyword>
<keyword id="KW-0496">Mitochondrion</keyword>
<keyword id="KW-0999">Mitochondrion inner membrane</keyword>
<keyword id="KW-1185">Reference proteome</keyword>
<keyword id="KW-0809">Transit peptide</keyword>
<organism>
    <name type="scientific">Emericella nidulans (strain FGSC A4 / ATCC 38163 / CBS 112.46 / NRRL 194 / M139)</name>
    <name type="common">Aspergillus nidulans</name>
    <dbReference type="NCBI Taxonomy" id="227321"/>
    <lineage>
        <taxon>Eukaryota</taxon>
        <taxon>Fungi</taxon>
        <taxon>Dikarya</taxon>
        <taxon>Ascomycota</taxon>
        <taxon>Pezizomycotina</taxon>
        <taxon>Eurotiomycetes</taxon>
        <taxon>Eurotiomycetidae</taxon>
        <taxon>Eurotiales</taxon>
        <taxon>Aspergillaceae</taxon>
        <taxon>Aspergillus</taxon>
        <taxon>Aspergillus subgen. Nidulantes</taxon>
    </lineage>
</organism>